<feature type="chain" id="PRO_0000354489" description="Large ribosomal subunit protein uL22">
    <location>
        <begin position="1"/>
        <end position="177"/>
    </location>
</feature>
<feature type="region of interest" description="Disordered" evidence="2">
    <location>
        <begin position="118"/>
        <end position="177"/>
    </location>
</feature>
<feature type="compositionally biased region" description="Basic and acidic residues" evidence="2">
    <location>
        <begin position="121"/>
        <end position="130"/>
    </location>
</feature>
<feature type="compositionally biased region" description="Low complexity" evidence="2">
    <location>
        <begin position="145"/>
        <end position="167"/>
    </location>
</feature>
<dbReference type="EMBL" id="CP000580">
    <property type="protein sequence ID" value="ABN96853.1"/>
    <property type="molecule type" value="Genomic_DNA"/>
</dbReference>
<dbReference type="SMR" id="A3PVC6"/>
<dbReference type="KEGG" id="mjl:Mjls_1045"/>
<dbReference type="HOGENOM" id="CLU_083987_3_2_11"/>
<dbReference type="BioCyc" id="MSP164757:G1G8C-1058-MONOMER"/>
<dbReference type="GO" id="GO:0022625">
    <property type="term" value="C:cytosolic large ribosomal subunit"/>
    <property type="evidence" value="ECO:0007669"/>
    <property type="project" value="TreeGrafter"/>
</dbReference>
<dbReference type="GO" id="GO:0019843">
    <property type="term" value="F:rRNA binding"/>
    <property type="evidence" value="ECO:0007669"/>
    <property type="project" value="UniProtKB-UniRule"/>
</dbReference>
<dbReference type="GO" id="GO:0003735">
    <property type="term" value="F:structural constituent of ribosome"/>
    <property type="evidence" value="ECO:0007669"/>
    <property type="project" value="InterPro"/>
</dbReference>
<dbReference type="GO" id="GO:0006412">
    <property type="term" value="P:translation"/>
    <property type="evidence" value="ECO:0007669"/>
    <property type="project" value="UniProtKB-UniRule"/>
</dbReference>
<dbReference type="CDD" id="cd00336">
    <property type="entry name" value="Ribosomal_L22"/>
    <property type="match status" value="1"/>
</dbReference>
<dbReference type="FunFam" id="3.90.470.10:FF:000002">
    <property type="entry name" value="50S ribosomal protein L22"/>
    <property type="match status" value="1"/>
</dbReference>
<dbReference type="Gene3D" id="3.90.470.10">
    <property type="entry name" value="Ribosomal protein L22/L17"/>
    <property type="match status" value="1"/>
</dbReference>
<dbReference type="HAMAP" id="MF_01331_B">
    <property type="entry name" value="Ribosomal_uL22_B"/>
    <property type="match status" value="1"/>
</dbReference>
<dbReference type="InterPro" id="IPR001063">
    <property type="entry name" value="Ribosomal_uL22"/>
</dbReference>
<dbReference type="InterPro" id="IPR005727">
    <property type="entry name" value="Ribosomal_uL22_bac/chlpt-type"/>
</dbReference>
<dbReference type="InterPro" id="IPR047867">
    <property type="entry name" value="Ribosomal_uL22_bac/org-type"/>
</dbReference>
<dbReference type="InterPro" id="IPR018260">
    <property type="entry name" value="Ribosomal_uL22_CS"/>
</dbReference>
<dbReference type="InterPro" id="IPR036394">
    <property type="entry name" value="Ribosomal_uL22_sf"/>
</dbReference>
<dbReference type="NCBIfam" id="TIGR01044">
    <property type="entry name" value="rplV_bact"/>
    <property type="match status" value="1"/>
</dbReference>
<dbReference type="PANTHER" id="PTHR13501">
    <property type="entry name" value="CHLOROPLAST 50S RIBOSOMAL PROTEIN L22-RELATED"/>
    <property type="match status" value="1"/>
</dbReference>
<dbReference type="PANTHER" id="PTHR13501:SF8">
    <property type="entry name" value="LARGE RIBOSOMAL SUBUNIT PROTEIN UL22M"/>
    <property type="match status" value="1"/>
</dbReference>
<dbReference type="Pfam" id="PF00237">
    <property type="entry name" value="Ribosomal_L22"/>
    <property type="match status" value="1"/>
</dbReference>
<dbReference type="SUPFAM" id="SSF54843">
    <property type="entry name" value="Ribosomal protein L22"/>
    <property type="match status" value="1"/>
</dbReference>
<dbReference type="PROSITE" id="PS00464">
    <property type="entry name" value="RIBOSOMAL_L22"/>
    <property type="match status" value="1"/>
</dbReference>
<proteinExistence type="inferred from homology"/>
<organism>
    <name type="scientific">Mycobacterium sp. (strain JLS)</name>
    <dbReference type="NCBI Taxonomy" id="164757"/>
    <lineage>
        <taxon>Bacteria</taxon>
        <taxon>Bacillati</taxon>
        <taxon>Actinomycetota</taxon>
        <taxon>Actinomycetes</taxon>
        <taxon>Mycobacteriales</taxon>
        <taxon>Mycobacteriaceae</taxon>
        <taxon>Mycobacterium</taxon>
    </lineage>
</organism>
<gene>
    <name evidence="1" type="primary">rplV</name>
    <name type="ordered locus">Mjls_1045</name>
</gene>
<evidence type="ECO:0000255" key="1">
    <source>
        <dbReference type="HAMAP-Rule" id="MF_01331"/>
    </source>
</evidence>
<evidence type="ECO:0000256" key="2">
    <source>
        <dbReference type="SAM" id="MobiDB-lite"/>
    </source>
</evidence>
<evidence type="ECO:0000305" key="3"/>
<reference key="1">
    <citation type="submission" date="2007-02" db="EMBL/GenBank/DDBJ databases">
        <title>Complete sequence of Mycobacterium sp. JLS.</title>
        <authorList>
            <consortium name="US DOE Joint Genome Institute"/>
            <person name="Copeland A."/>
            <person name="Lucas S."/>
            <person name="Lapidus A."/>
            <person name="Barry K."/>
            <person name="Detter J.C."/>
            <person name="Glavina del Rio T."/>
            <person name="Hammon N."/>
            <person name="Israni S."/>
            <person name="Dalin E."/>
            <person name="Tice H."/>
            <person name="Pitluck S."/>
            <person name="Chain P."/>
            <person name="Malfatti S."/>
            <person name="Shin M."/>
            <person name="Vergez L."/>
            <person name="Schmutz J."/>
            <person name="Larimer F."/>
            <person name="Land M."/>
            <person name="Hauser L."/>
            <person name="Kyrpides N."/>
            <person name="Mikhailova N."/>
            <person name="Miller C.D."/>
            <person name="Anderson A.J."/>
            <person name="Sims R.C."/>
            <person name="Richardson P."/>
        </authorList>
    </citation>
    <scope>NUCLEOTIDE SEQUENCE [LARGE SCALE GENOMIC DNA]</scope>
    <source>
        <strain>JLS</strain>
    </source>
</reference>
<accession>A3PVC6</accession>
<protein>
    <recommendedName>
        <fullName evidence="1">Large ribosomal subunit protein uL22</fullName>
    </recommendedName>
    <alternativeName>
        <fullName evidence="3">50S ribosomal protein L22</fullName>
    </alternativeName>
</protein>
<comment type="function">
    <text evidence="1">This protein binds specifically to 23S rRNA; its binding is stimulated by other ribosomal proteins, e.g. L4, L17, and L20. It is important during the early stages of 50S assembly. It makes multiple contacts with different domains of the 23S rRNA in the assembled 50S subunit and ribosome (By similarity).</text>
</comment>
<comment type="function">
    <text evidence="1">The globular domain of the protein is located near the polypeptide exit tunnel on the outside of the subunit, while an extended beta-hairpin is found that lines the wall of the exit tunnel in the center of the 70S ribosome.</text>
</comment>
<comment type="subunit">
    <text evidence="1">Part of the 50S ribosomal subunit.</text>
</comment>
<comment type="similarity">
    <text evidence="1">Belongs to the universal ribosomal protein uL22 family.</text>
</comment>
<sequence length="177" mass="18415">MTTATTNPSTYPNAMAVARYVGISASKARRVIDLVRGKSVEEALDILRWAPQQASEPVAKVIASAAANAQNNEGLDPSTLVVATIHADEGPTAKRIRPRAQGRAFRIRKRTSHITVIVESRPSREGRRGGAGESAGGARARRAQGSKAAAAKKAPASSSTKAATTTEASEEAKGGSQ</sequence>
<keyword id="KW-0687">Ribonucleoprotein</keyword>
<keyword id="KW-0689">Ribosomal protein</keyword>
<keyword id="KW-0694">RNA-binding</keyword>
<keyword id="KW-0699">rRNA-binding</keyword>
<name>RL22_MYCSJ</name>